<accession>A0M0D9</accession>
<keyword id="KW-0687">Ribonucleoprotein</keyword>
<keyword id="KW-0689">Ribosomal protein</keyword>
<keyword id="KW-0694">RNA-binding</keyword>
<keyword id="KW-0699">rRNA-binding</keyword>
<name>RL9_CHRFK</name>
<comment type="function">
    <text evidence="1">Binds to the 23S rRNA.</text>
</comment>
<comment type="similarity">
    <text evidence="1">Belongs to the bacterial ribosomal protein bL9 family.</text>
</comment>
<protein>
    <recommendedName>
        <fullName evidence="1">Large ribosomal subunit protein bL9</fullName>
    </recommendedName>
    <alternativeName>
        <fullName evidence="2">50S ribosomal protein L9</fullName>
    </alternativeName>
</protein>
<feature type="chain" id="PRO_1000014785" description="Large ribosomal subunit protein bL9">
    <location>
        <begin position="1"/>
        <end position="149"/>
    </location>
</feature>
<organism>
    <name type="scientific">Christiangramia forsetii (strain DSM 17595 / CGMCC 1.15422 / KT0803)</name>
    <name type="common">Gramella forsetii</name>
    <dbReference type="NCBI Taxonomy" id="411154"/>
    <lineage>
        <taxon>Bacteria</taxon>
        <taxon>Pseudomonadati</taxon>
        <taxon>Bacteroidota</taxon>
        <taxon>Flavobacteriia</taxon>
        <taxon>Flavobacteriales</taxon>
        <taxon>Flavobacteriaceae</taxon>
        <taxon>Christiangramia</taxon>
    </lineage>
</organism>
<evidence type="ECO:0000255" key="1">
    <source>
        <dbReference type="HAMAP-Rule" id="MF_00503"/>
    </source>
</evidence>
<evidence type="ECO:0000305" key="2"/>
<gene>
    <name evidence="1" type="primary">rplI</name>
    <name type="ordered locus">GFO_1110</name>
</gene>
<reference key="1">
    <citation type="journal article" date="2006" name="Environ. Microbiol.">
        <title>Whole genome analysis of the marine Bacteroidetes'Gramella forsetii' reveals adaptations to degradation of polymeric organic matter.</title>
        <authorList>
            <person name="Bauer M."/>
            <person name="Kube M."/>
            <person name="Teeling H."/>
            <person name="Richter M."/>
            <person name="Lombardot T."/>
            <person name="Allers E."/>
            <person name="Wuerdemann C.A."/>
            <person name="Quast C."/>
            <person name="Kuhl H."/>
            <person name="Knaust F."/>
            <person name="Woebken D."/>
            <person name="Bischof K."/>
            <person name="Mussmann M."/>
            <person name="Choudhuri J.V."/>
            <person name="Meyer F."/>
            <person name="Reinhardt R."/>
            <person name="Amann R.I."/>
            <person name="Gloeckner F.O."/>
        </authorList>
    </citation>
    <scope>NUCLEOTIDE SEQUENCE [LARGE SCALE GENOMIC DNA]</scope>
    <source>
        <strain>DSM 17595 / CGMCC 1.15422 / KT0803</strain>
    </source>
</reference>
<proteinExistence type="inferred from homology"/>
<sequence>MEVILKKDVDNLGFKDDLVAVKNGYGRNYLIPHGFAELATPSARKVLSETLKQRAYKEQKHIDEAKKQAEKLNNLEIKITAKAGAGDKLFGSITNGDLADALAKEGVEIEKKYISIAGGNIKRLGQYDATLRFHREVISNFSFDVVGDA</sequence>
<dbReference type="EMBL" id="CU207366">
    <property type="protein sequence ID" value="CAL66084.1"/>
    <property type="molecule type" value="Genomic_DNA"/>
</dbReference>
<dbReference type="RefSeq" id="WP_011709003.1">
    <property type="nucleotide sequence ID" value="NC_008571.1"/>
</dbReference>
<dbReference type="SMR" id="A0M0D9"/>
<dbReference type="STRING" id="411154.GFO_1110"/>
<dbReference type="KEGG" id="gfo:GFO_1110"/>
<dbReference type="eggNOG" id="COG0359">
    <property type="taxonomic scope" value="Bacteria"/>
</dbReference>
<dbReference type="HOGENOM" id="CLU_078938_3_0_10"/>
<dbReference type="OrthoDB" id="9788336at2"/>
<dbReference type="Proteomes" id="UP000000755">
    <property type="component" value="Chromosome"/>
</dbReference>
<dbReference type="GO" id="GO:1990904">
    <property type="term" value="C:ribonucleoprotein complex"/>
    <property type="evidence" value="ECO:0007669"/>
    <property type="project" value="UniProtKB-KW"/>
</dbReference>
<dbReference type="GO" id="GO:0005840">
    <property type="term" value="C:ribosome"/>
    <property type="evidence" value="ECO:0007669"/>
    <property type="project" value="UniProtKB-KW"/>
</dbReference>
<dbReference type="GO" id="GO:0019843">
    <property type="term" value="F:rRNA binding"/>
    <property type="evidence" value="ECO:0007669"/>
    <property type="project" value="UniProtKB-UniRule"/>
</dbReference>
<dbReference type="GO" id="GO:0003735">
    <property type="term" value="F:structural constituent of ribosome"/>
    <property type="evidence" value="ECO:0007669"/>
    <property type="project" value="InterPro"/>
</dbReference>
<dbReference type="GO" id="GO:0006412">
    <property type="term" value="P:translation"/>
    <property type="evidence" value="ECO:0007669"/>
    <property type="project" value="UniProtKB-UniRule"/>
</dbReference>
<dbReference type="Gene3D" id="3.10.430.100">
    <property type="entry name" value="Ribosomal protein L9, C-terminal domain"/>
    <property type="match status" value="1"/>
</dbReference>
<dbReference type="Gene3D" id="3.40.5.10">
    <property type="entry name" value="Ribosomal protein L9, N-terminal domain"/>
    <property type="match status" value="1"/>
</dbReference>
<dbReference type="HAMAP" id="MF_00503">
    <property type="entry name" value="Ribosomal_bL9"/>
    <property type="match status" value="1"/>
</dbReference>
<dbReference type="InterPro" id="IPR000244">
    <property type="entry name" value="Ribosomal_bL9"/>
</dbReference>
<dbReference type="InterPro" id="IPR009027">
    <property type="entry name" value="Ribosomal_bL9/RNase_H1_N"/>
</dbReference>
<dbReference type="InterPro" id="IPR020594">
    <property type="entry name" value="Ribosomal_bL9_bac/chp"/>
</dbReference>
<dbReference type="InterPro" id="IPR020069">
    <property type="entry name" value="Ribosomal_bL9_C"/>
</dbReference>
<dbReference type="InterPro" id="IPR036791">
    <property type="entry name" value="Ribosomal_bL9_C_sf"/>
</dbReference>
<dbReference type="InterPro" id="IPR020070">
    <property type="entry name" value="Ribosomal_bL9_N"/>
</dbReference>
<dbReference type="InterPro" id="IPR036935">
    <property type="entry name" value="Ribosomal_bL9_N_sf"/>
</dbReference>
<dbReference type="NCBIfam" id="TIGR00158">
    <property type="entry name" value="L9"/>
    <property type="match status" value="1"/>
</dbReference>
<dbReference type="PANTHER" id="PTHR21368">
    <property type="entry name" value="50S RIBOSOMAL PROTEIN L9"/>
    <property type="match status" value="1"/>
</dbReference>
<dbReference type="Pfam" id="PF03948">
    <property type="entry name" value="Ribosomal_L9_C"/>
    <property type="match status" value="1"/>
</dbReference>
<dbReference type="Pfam" id="PF01281">
    <property type="entry name" value="Ribosomal_L9_N"/>
    <property type="match status" value="1"/>
</dbReference>
<dbReference type="SUPFAM" id="SSF55658">
    <property type="entry name" value="L9 N-domain-like"/>
    <property type="match status" value="1"/>
</dbReference>
<dbReference type="SUPFAM" id="SSF55653">
    <property type="entry name" value="Ribosomal protein L9 C-domain"/>
    <property type="match status" value="1"/>
</dbReference>